<accession>A0A7T1FRB0</accession>
<dbReference type="EC" id="1.10.3.2" evidence="3"/>
<dbReference type="EMBL" id="MW045312">
    <property type="protein sequence ID" value="QPM92784.1"/>
    <property type="molecule type" value="Genomic_DNA"/>
</dbReference>
<dbReference type="SMR" id="A0A7T1FRB0"/>
<dbReference type="GO" id="GO:0005507">
    <property type="term" value="F:copper ion binding"/>
    <property type="evidence" value="ECO:0007669"/>
    <property type="project" value="InterPro"/>
</dbReference>
<dbReference type="GO" id="GO:0052716">
    <property type="term" value="F:hydroquinone:oxygen oxidoreductase activity"/>
    <property type="evidence" value="ECO:0007669"/>
    <property type="project" value="UniProtKB-EC"/>
</dbReference>
<dbReference type="CDD" id="cd13844">
    <property type="entry name" value="CuRO_1_BOD_CotA_like"/>
    <property type="match status" value="1"/>
</dbReference>
<dbReference type="CDD" id="cd13868">
    <property type="entry name" value="CuRO_2_CotA_like"/>
    <property type="match status" value="1"/>
</dbReference>
<dbReference type="CDD" id="cd13891">
    <property type="entry name" value="CuRO_3_CotA_like"/>
    <property type="match status" value="1"/>
</dbReference>
<dbReference type="FunFam" id="2.60.40.420:FF:000081">
    <property type="entry name" value="Spore coat protein A"/>
    <property type="match status" value="1"/>
</dbReference>
<dbReference type="FunFam" id="2.60.40.420:FF:000087">
    <property type="entry name" value="Spore coat protein A"/>
    <property type="match status" value="1"/>
</dbReference>
<dbReference type="Gene3D" id="2.60.40.420">
    <property type="entry name" value="Cupredoxins - blue copper proteins"/>
    <property type="match status" value="3"/>
</dbReference>
<dbReference type="InterPro" id="IPR011707">
    <property type="entry name" value="Cu-oxidase-like_N"/>
</dbReference>
<dbReference type="InterPro" id="IPR001117">
    <property type="entry name" value="Cu-oxidase_2nd"/>
</dbReference>
<dbReference type="InterPro" id="IPR011706">
    <property type="entry name" value="Cu-oxidase_C"/>
</dbReference>
<dbReference type="InterPro" id="IPR045087">
    <property type="entry name" value="Cu-oxidase_fam"/>
</dbReference>
<dbReference type="InterPro" id="IPR008972">
    <property type="entry name" value="Cupredoxin"/>
</dbReference>
<dbReference type="PANTHER" id="PTHR48267:SF1">
    <property type="entry name" value="BILIRUBIN OXIDASE"/>
    <property type="match status" value="1"/>
</dbReference>
<dbReference type="PANTHER" id="PTHR48267">
    <property type="entry name" value="CUPREDOXIN SUPERFAMILY PROTEIN"/>
    <property type="match status" value="1"/>
</dbReference>
<dbReference type="Pfam" id="PF00394">
    <property type="entry name" value="Cu-oxidase"/>
    <property type="match status" value="1"/>
</dbReference>
<dbReference type="Pfam" id="PF07731">
    <property type="entry name" value="Cu-oxidase_2"/>
    <property type="match status" value="1"/>
</dbReference>
<dbReference type="Pfam" id="PF07732">
    <property type="entry name" value="Cu-oxidase_3"/>
    <property type="match status" value="2"/>
</dbReference>
<dbReference type="SUPFAM" id="SSF49503">
    <property type="entry name" value="Cupredoxins"/>
    <property type="match status" value="3"/>
</dbReference>
<proteinExistence type="evidence at protein level"/>
<sequence>MNLEKFVDELPIPEVAEPVKKNPRQTYYEIAMEEVFLKVHRDLPPTKLWTYNGSLPGPTIKANRNEKVKVKWMNKLPLKHFLPVDHTIHAGHHDEPEVKTVVHLHGGVTPASSDGYPEAWFSRDFEATGPFFEREVYEYPNHQQACTLWYHDHAMALTRLNVYAGLAGFYLISDAFEKSLELPKDEYDIPLMIMDRTFQEDGALFYPSRPNNTPEDSDLPDPSIVPFFCGETILVNGKVWPYLEVEPRKYRFRILNASNTRTYELHLDNDATILQIGSDGGFLPRPVHHQSFSIAPAERFDVIIDFSAYENKTIVLKNSAGCGQDVNPETDANIMQFKVTRPLKGRAAKTLRPIFKPLPPLRPSRADNERTLTLTGTQDKYGRPILLLDNQFWNDPVTENPRLGSVEVWNIVNPTRGTHPIHLHLVQFRVIDRRPFDTDIYQSTGEIVYTGPNEAPPLHEQGYKDTIQAHAGEVIRIIARFVPYSGRYVWHCHILEHEDYDMMRPMDIIQ</sequence>
<reference key="1">
    <citation type="journal article" date="2021" name="Int. J. Biol. Macromol.">
        <title>An alkaline thermostable laccase from termite gut associated strain of Bacillus stratosphericus.</title>
        <authorList>
            <person name="Xiao Y."/>
            <person name="Li J."/>
            <person name="Wu P."/>
            <person name="Ning N."/>
            <person name="Li J."/>
            <person name="Shen Y."/>
            <person name="Huang Q."/>
            <person name="Ni J."/>
        </authorList>
    </citation>
    <scope>NUCLEOTIDE SEQUENCE [GENOMIC DNA]</scope>
    <scope>FUNCTION</scope>
    <scope>CATALYTIC ACTIVITY</scope>
    <scope>ACTIVITY REGULATION</scope>
    <scope>BIOPHYSICOCHEMICAL PROPERTIES</scope>
    <scope>BIOTECHNOLOGY</scope>
    <source>
        <strain>BCMC2</strain>
    </source>
</reference>
<keyword id="KW-0186">Copper</keyword>
<keyword id="KW-0479">Metal-binding</keyword>
<keyword id="KW-0560">Oxidoreductase</keyword>
<keyword id="KW-0677">Repeat</keyword>
<name>COTA_BACIT</name>
<organism>
    <name type="scientific">Bacillus stratosphericus</name>
    <dbReference type="NCBI Taxonomy" id="293386"/>
    <lineage>
        <taxon>Bacteria</taxon>
        <taxon>Bacillati</taxon>
        <taxon>Bacillota</taxon>
        <taxon>Bacilli</taxon>
        <taxon>Bacillales</taxon>
        <taxon>Bacillaceae</taxon>
        <taxon>Bacillus</taxon>
    </lineage>
</organism>
<protein>
    <recommendedName>
        <fullName evidence="4">Laccase</fullName>
        <ecNumber evidence="3">1.10.3.2</ecNumber>
    </recommendedName>
    <alternativeName>
        <fullName evidence="4">BaCotA</fullName>
    </alternativeName>
</protein>
<gene>
    <name evidence="4" type="primary">cotA</name>
</gene>
<evidence type="ECO:0000250" key="1">
    <source>
        <dbReference type="UniProtKB" id="P07788"/>
    </source>
</evidence>
<evidence type="ECO:0000255" key="2"/>
<evidence type="ECO:0000269" key="3">
    <source>
    </source>
</evidence>
<evidence type="ECO:0000303" key="4">
    <source>
    </source>
</evidence>
<evidence type="ECO:0000305" key="5"/>
<feature type="chain" id="PRO_0000453717" description="Laccase">
    <location>
        <begin position="1"/>
        <end position="510"/>
    </location>
</feature>
<feature type="domain" description="Plastocyanin-like 1" evidence="2">
    <location>
        <begin position="45"/>
        <end position="79"/>
    </location>
</feature>
<feature type="domain" description="Plastocyanin-like 2" evidence="2">
    <location>
        <begin position="99"/>
        <end position="174"/>
    </location>
</feature>
<feature type="domain" description="Plastocyanin-like 3" evidence="2">
    <location>
        <begin position="242"/>
        <end position="317"/>
    </location>
</feature>
<feature type="domain" description="Plastocyanin-like 4" evidence="2">
    <location>
        <begin position="372"/>
        <end position="506"/>
    </location>
</feature>
<feature type="binding site" description="type 2 copper site" evidence="1">
    <location>
        <position position="103"/>
    </location>
    <ligand>
        <name>Cu cation</name>
        <dbReference type="ChEBI" id="CHEBI:23378"/>
        <label>1</label>
    </ligand>
</feature>
<feature type="binding site" description="type 3 copper site" evidence="1">
    <location>
        <position position="105"/>
    </location>
    <ligand>
        <name>Cu cation</name>
        <dbReference type="ChEBI" id="CHEBI:23378"/>
        <label>2</label>
    </ligand>
</feature>
<feature type="binding site" description="type 3 copper site" evidence="1">
    <location>
        <position position="151"/>
    </location>
    <ligand>
        <name>Cu cation</name>
        <dbReference type="ChEBI" id="CHEBI:23378"/>
        <label>2</label>
    </ligand>
</feature>
<feature type="binding site" description="type 3 copper site" evidence="1">
    <location>
        <position position="153"/>
    </location>
    <ligand>
        <name>Cu cation</name>
        <dbReference type="ChEBI" id="CHEBI:23378"/>
        <label>3</label>
    </ligand>
</feature>
<feature type="binding site" description="type 1 copper site" evidence="1">
    <location>
        <position position="419"/>
    </location>
    <ligand>
        <name>Cu cation</name>
        <dbReference type="ChEBI" id="CHEBI:23378"/>
        <label>4</label>
    </ligand>
</feature>
<feature type="binding site" description="type 2 copper site" evidence="1">
    <location>
        <position position="422"/>
    </location>
    <ligand>
        <name>Cu cation</name>
        <dbReference type="ChEBI" id="CHEBI:23378"/>
        <label>1</label>
    </ligand>
</feature>
<feature type="binding site" description="type 3 copper site" evidence="1">
    <location>
        <position position="424"/>
    </location>
    <ligand>
        <name>Cu cation</name>
        <dbReference type="ChEBI" id="CHEBI:23378"/>
        <label>3</label>
    </ligand>
</feature>
<feature type="binding site" description="type 3 copper site" evidence="1">
    <location>
        <position position="491"/>
    </location>
    <ligand>
        <name>Cu cation</name>
        <dbReference type="ChEBI" id="CHEBI:23378"/>
        <label>3</label>
    </ligand>
</feature>
<feature type="binding site" description="type 1 copper site" evidence="1">
    <location>
        <position position="492"/>
    </location>
    <ligand>
        <name>Cu cation</name>
        <dbReference type="ChEBI" id="CHEBI:23378"/>
        <label>4</label>
    </ligand>
</feature>
<feature type="binding site" description="type 3 copper site" evidence="1">
    <location>
        <position position="493"/>
    </location>
    <ligand>
        <name>Cu cation</name>
        <dbReference type="ChEBI" id="CHEBI:23378"/>
        <label>2</label>
    </ligand>
</feature>
<feature type="binding site" description="type 1 copper site" evidence="1">
    <location>
        <position position="497"/>
    </location>
    <ligand>
        <name>Cu cation</name>
        <dbReference type="ChEBI" id="CHEBI:23378"/>
        <label>4</label>
    </ligand>
</feature>
<feature type="binding site" description="type 1 copper site" evidence="1">
    <location>
        <position position="502"/>
    </location>
    <ligand>
        <name>Cu cation</name>
        <dbReference type="ChEBI" id="CHEBI:23378"/>
        <label>4</label>
    </ligand>
</feature>
<feature type="site" description="Plays a crucial role in the protonation steps" evidence="1">
    <location>
        <position position="114"/>
    </location>
</feature>
<feature type="site" description="Plays a crucial role in the protonation steps" evidence="1">
    <location>
        <position position="498"/>
    </location>
</feature>
<comment type="function">
    <text evidence="3">Multicopper oxidase that catalyzes the oxidation of a variety of substrates, including phenolic and non-phenolic compounds. Substrates include 2,6-dimethoxyphenol (2,6-DMP) and the non-phenolic compound 2,2'-azino-bis(3-ethylbenzothiazoline-6-sulfonic acid) (ABTS). Cannot use guaiacol and catechol.</text>
</comment>
<comment type="catalytic activity">
    <reaction evidence="3">
        <text>4 hydroquinone + O2 = 4 benzosemiquinone + 2 H2O</text>
        <dbReference type="Rhea" id="RHEA:11276"/>
        <dbReference type="ChEBI" id="CHEBI:15377"/>
        <dbReference type="ChEBI" id="CHEBI:15379"/>
        <dbReference type="ChEBI" id="CHEBI:17594"/>
        <dbReference type="ChEBI" id="CHEBI:17977"/>
        <dbReference type="EC" id="1.10.3.2"/>
    </reaction>
</comment>
<comment type="cofactor">
    <cofactor evidence="1">
        <name>Cu(2+)</name>
        <dbReference type="ChEBI" id="CHEBI:29036"/>
    </cofactor>
    <text evidence="1">Binds 4 copper ions per subunit.</text>
</comment>
<comment type="activity regulation">
    <text evidence="3">Resistant to alkali and organic solvents such as methanol, ethanol and acetone. Resistant to EDTA, which might be explained by the spatial protection of copper ions in the active sites. Inhibited by DMSO. Strongly inhibited by Fe(2+) and DTT.</text>
</comment>
<comment type="biophysicochemical properties">
    <kinetics>
        <KM evidence="3">0.278 mM for ABTS</KM>
        <Vmax evidence="3">555.0 umol/min/mg enzyme with ABTS as substrate</Vmax>
    </kinetics>
    <phDependence>
        <text evidence="3">Optimum pH is 5.0.</text>
    </phDependence>
    <temperatureDependence>
        <text evidence="3">Thermostable. Optimum temperature is 70 degrees Celsius.</text>
    </temperatureDependence>
</comment>
<comment type="biotechnology">
    <text evidence="3">Exhibits efficient decolorization ability towards indigo and crystal violet, which are extensively used in textile industries and biochemical study, suggesting a potential application of this laccase in industrial processes.</text>
</comment>
<comment type="similarity">
    <text evidence="5">Belongs to the multicopper oxidase family.</text>
</comment>